<reference key="1">
    <citation type="journal article" date="1994" name="Mol. Microbiol.">
        <title>Molecular analysis of the Erwinia chrysanthemi region containing the kdgA and zwf genes.</title>
        <authorList>
            <person name="Hugouvieux-Cotte-Pattat N."/>
            <person name="Robert-Baudouy J."/>
        </authorList>
    </citation>
    <scope>NUCLEOTIDE SEQUENCE [GENOMIC DNA]</scope>
    <source>
        <strain>3937</strain>
    </source>
</reference>
<reference key="2">
    <citation type="journal article" date="2011" name="J. Bacteriol.">
        <title>Genome sequence of the plant-pathogenic bacterium Dickeya dadantii 3937.</title>
        <authorList>
            <person name="Glasner J.D."/>
            <person name="Yang C.H."/>
            <person name="Reverchon S."/>
            <person name="Hugouvieux-Cotte-Pattat N."/>
            <person name="Condemine G."/>
            <person name="Bohin J.P."/>
            <person name="Van Gijsegem F."/>
            <person name="Yang S."/>
            <person name="Franza T."/>
            <person name="Expert D."/>
            <person name="Plunkett G. III"/>
            <person name="San Francisco M.J."/>
            <person name="Charkowski A.O."/>
            <person name="Py B."/>
            <person name="Bell K."/>
            <person name="Rauscher L."/>
            <person name="Rodriguez-Palenzuela P."/>
            <person name="Toussaint A."/>
            <person name="Holeva M.C."/>
            <person name="He S.Y."/>
            <person name="Douet V."/>
            <person name="Boccara M."/>
            <person name="Blanco C."/>
            <person name="Toth I."/>
            <person name="Anderson B.D."/>
            <person name="Biehl B.S."/>
            <person name="Mau B."/>
            <person name="Flynn S.M."/>
            <person name="Barras F."/>
            <person name="Lindeberg M."/>
            <person name="Birch P.R."/>
            <person name="Tsuyumu S."/>
            <person name="Shi X."/>
            <person name="Hibbing M."/>
            <person name="Yap M.N."/>
            <person name="Carpentier M."/>
            <person name="Dassa E."/>
            <person name="Umehara M."/>
            <person name="Kim J.F."/>
            <person name="Rusch M."/>
            <person name="Soni P."/>
            <person name="Mayhew G.F."/>
            <person name="Fouts D.E."/>
            <person name="Gill S.R."/>
            <person name="Blattner F.R."/>
            <person name="Keen N.T."/>
            <person name="Perna N.T."/>
        </authorList>
    </citation>
    <scope>NUCLEOTIDE SEQUENCE [LARGE SCALE GENOMIC DNA]</scope>
    <source>
        <strain>3937</strain>
    </source>
</reference>
<name>ALKD_DICD3</name>
<accession>P38448</accession>
<accession>E0SB90</accession>
<protein>
    <recommendedName>
        <fullName evidence="1">2-dehydro-3-deoxy-phosphogluconate aldolase</fullName>
        <ecNumber evidence="1">4.1.2.14</ecNumber>
    </recommendedName>
    <alternativeName>
        <fullName evidence="1">2-keto-3-deoxy-6-phosphogluconate aldolase</fullName>
        <shortName evidence="1">KDPG aldolase</shortName>
    </alternativeName>
</protein>
<feature type="chain" id="PRO_0000201040" description="2-dehydro-3-deoxy-phosphogluconate aldolase">
    <location>
        <begin position="1"/>
        <end position="213"/>
    </location>
</feature>
<feature type="active site" description="Proton acceptor" evidence="1">
    <location>
        <position position="45"/>
    </location>
</feature>
<feature type="active site" description="Schiff-base intermediate with substrate" evidence="1">
    <location>
        <position position="133"/>
    </location>
</feature>
<feature type="binding site" evidence="1">
    <location>
        <position position="49"/>
    </location>
    <ligand>
        <name>pyruvate</name>
        <dbReference type="ChEBI" id="CHEBI:15361"/>
    </ligand>
</feature>
<feature type="binding site" evidence="1">
    <location>
        <position position="73"/>
    </location>
    <ligand>
        <name>pyruvate</name>
        <dbReference type="ChEBI" id="CHEBI:15361"/>
    </ligand>
</feature>
<feature type="binding site" description="covalent" evidence="1">
    <location>
        <position position="133"/>
    </location>
    <ligand>
        <name>pyruvate</name>
        <dbReference type="ChEBI" id="CHEBI:15361"/>
    </ligand>
</feature>
<feature type="site" description="Plays a major role in determining the stereoselectivity" evidence="1">
    <location>
        <position position="161"/>
    </location>
</feature>
<evidence type="ECO:0000250" key="1">
    <source>
        <dbReference type="UniProtKB" id="P0A955"/>
    </source>
</evidence>
<evidence type="ECO:0000303" key="2">
    <source>
    </source>
</evidence>
<evidence type="ECO:0000305" key="3"/>
<sequence length="213" mass="22184">MKNWKTSAEQILTAGPVVPVIVINKLEHAVPMAKALVAGGVRVLELTLRTECAVEAIRLIAQEVPDAIVGAGTVTNPQQLAEVTAAGAQFAISPGLTEPLLKAATEGTIPLIPGISTVSELMLGMDYGLREFKFFPAEANGGVKALQAIAGPFGKIRFCPTGGISLKNYRDYLALKSVLCVGGSWLVPADALESGDYDRITALAREAVAGATA</sequence>
<gene>
    <name type="primary">eda</name>
    <name evidence="2" type="synonym">kdgA</name>
    <name type="ordered locus">Dda3937_03573</name>
</gene>
<dbReference type="EC" id="4.1.2.14" evidence="1"/>
<dbReference type="EMBL" id="X74866">
    <property type="protein sequence ID" value="CAA52859.1"/>
    <property type="molecule type" value="Genomic_DNA"/>
</dbReference>
<dbReference type="EMBL" id="CP002038">
    <property type="protein sequence ID" value="ADM98359.1"/>
    <property type="molecule type" value="Genomic_DNA"/>
</dbReference>
<dbReference type="PIR" id="S37054">
    <property type="entry name" value="S37054"/>
</dbReference>
<dbReference type="RefSeq" id="WP_013317813.1">
    <property type="nucleotide sequence ID" value="NC_014500.1"/>
</dbReference>
<dbReference type="SMR" id="P38448"/>
<dbReference type="STRING" id="198628.Dda3937_03573"/>
<dbReference type="KEGG" id="ddd:Dda3937_03573"/>
<dbReference type="PATRIC" id="fig|198628.6.peg.2135"/>
<dbReference type="eggNOG" id="COG0800">
    <property type="taxonomic scope" value="Bacteria"/>
</dbReference>
<dbReference type="HOGENOM" id="CLU_077795_1_1_6"/>
<dbReference type="OrthoDB" id="9805177at2"/>
<dbReference type="BioCyc" id="MetaCyc:MONOMER-15645"/>
<dbReference type="UniPathway" id="UPA00856">
    <property type="reaction ID" value="UER00829"/>
</dbReference>
<dbReference type="Proteomes" id="UP000006859">
    <property type="component" value="Chromosome"/>
</dbReference>
<dbReference type="GO" id="GO:0005737">
    <property type="term" value="C:cytoplasm"/>
    <property type="evidence" value="ECO:0007669"/>
    <property type="project" value="UniProtKB-SubCell"/>
</dbReference>
<dbReference type="GO" id="GO:0008700">
    <property type="term" value="F:(R,S)-4-hydroxy-2-oxoglutarate aldolase activity"/>
    <property type="evidence" value="ECO:0007669"/>
    <property type="project" value="UniProtKB-EC"/>
</dbReference>
<dbReference type="GO" id="GO:0008675">
    <property type="term" value="F:2-dehydro-3-deoxy-phosphogluconate aldolase activity"/>
    <property type="evidence" value="ECO:0007669"/>
    <property type="project" value="UniProtKB-EC"/>
</dbReference>
<dbReference type="CDD" id="cd00452">
    <property type="entry name" value="KDPG_aldolase"/>
    <property type="match status" value="1"/>
</dbReference>
<dbReference type="Gene3D" id="3.20.20.70">
    <property type="entry name" value="Aldolase class I"/>
    <property type="match status" value="1"/>
</dbReference>
<dbReference type="InterPro" id="IPR000887">
    <property type="entry name" value="Aldlse_KDPG_KHG"/>
</dbReference>
<dbReference type="InterPro" id="IPR013785">
    <property type="entry name" value="Aldolase_TIM"/>
</dbReference>
<dbReference type="InterPro" id="IPR031337">
    <property type="entry name" value="KDPG/KHG_AS_1"/>
</dbReference>
<dbReference type="InterPro" id="IPR031338">
    <property type="entry name" value="KDPG/KHG_AS_2"/>
</dbReference>
<dbReference type="NCBIfam" id="TIGR01182">
    <property type="entry name" value="eda"/>
    <property type="match status" value="1"/>
</dbReference>
<dbReference type="NCBIfam" id="NF004325">
    <property type="entry name" value="PRK05718.1"/>
    <property type="match status" value="1"/>
</dbReference>
<dbReference type="PANTHER" id="PTHR30246:SF1">
    <property type="entry name" value="2-DEHYDRO-3-DEOXY-6-PHOSPHOGALACTONATE ALDOLASE-RELATED"/>
    <property type="match status" value="1"/>
</dbReference>
<dbReference type="PANTHER" id="PTHR30246">
    <property type="entry name" value="2-KETO-3-DEOXY-6-PHOSPHOGLUCONATE ALDOLASE"/>
    <property type="match status" value="1"/>
</dbReference>
<dbReference type="Pfam" id="PF01081">
    <property type="entry name" value="Aldolase"/>
    <property type="match status" value="1"/>
</dbReference>
<dbReference type="SUPFAM" id="SSF51569">
    <property type="entry name" value="Aldolase"/>
    <property type="match status" value="1"/>
</dbReference>
<dbReference type="PROSITE" id="PS00159">
    <property type="entry name" value="ALDOLASE_KDPG_KHG_1"/>
    <property type="match status" value="1"/>
</dbReference>
<dbReference type="PROSITE" id="PS00160">
    <property type="entry name" value="ALDOLASE_KDPG_KHG_2"/>
    <property type="match status" value="1"/>
</dbReference>
<comment type="function">
    <text evidence="1">Involved in the degradation of glucose via the Entner-Doudoroff pathway (By similarity). Catalyzes the reversible, stereospecific retro-aldol cleavage of 2-keto-3-deoxy-6-phosphogluconate (KDPG) to pyruvate and D-glyceraldehyde-3-phosphate (By similarity).</text>
</comment>
<comment type="catalytic activity">
    <reaction evidence="1">
        <text>2-dehydro-3-deoxy-6-phospho-D-gluconate = D-glyceraldehyde 3-phosphate + pyruvate</text>
        <dbReference type="Rhea" id="RHEA:17089"/>
        <dbReference type="ChEBI" id="CHEBI:15361"/>
        <dbReference type="ChEBI" id="CHEBI:57569"/>
        <dbReference type="ChEBI" id="CHEBI:59776"/>
        <dbReference type="EC" id="4.1.2.14"/>
    </reaction>
</comment>
<comment type="pathway">
    <text>Carbohydrate acid metabolism; 2-dehydro-3-deoxy-D-gluconate degradation; D-glyceraldehyde 3-phosphate and pyruvate from 2-dehydro-3-deoxy-D-gluconate: step 2/2.</text>
</comment>
<comment type="subunit">
    <text evidence="1">Homotrimer.</text>
</comment>
<comment type="subcellular location">
    <subcellularLocation>
        <location evidence="1">Cytoplasm</location>
    </subcellularLocation>
</comment>
<comment type="similarity">
    <text evidence="3">Belongs to the KHG/KDPG aldolase family.</text>
</comment>
<organism>
    <name type="scientific">Dickeya dadantii (strain 3937)</name>
    <name type="common">Erwinia chrysanthemi (strain 3937)</name>
    <dbReference type="NCBI Taxonomy" id="198628"/>
    <lineage>
        <taxon>Bacteria</taxon>
        <taxon>Pseudomonadati</taxon>
        <taxon>Pseudomonadota</taxon>
        <taxon>Gammaproteobacteria</taxon>
        <taxon>Enterobacterales</taxon>
        <taxon>Pectobacteriaceae</taxon>
        <taxon>Dickeya</taxon>
    </lineage>
</organism>
<proteinExistence type="inferred from homology"/>
<keyword id="KW-0119">Carbohydrate metabolism</keyword>
<keyword id="KW-0963">Cytoplasm</keyword>
<keyword id="KW-0456">Lyase</keyword>
<keyword id="KW-1185">Reference proteome</keyword>
<keyword id="KW-0704">Schiff base</keyword>